<name>SSTT_SHEHH</name>
<comment type="function">
    <text evidence="1">Involved in the import of serine and threonine into the cell, with the concomitant import of sodium (symport system).</text>
</comment>
<comment type="catalytic activity">
    <reaction evidence="1">
        <text>L-serine(in) + Na(+)(in) = L-serine(out) + Na(+)(out)</text>
        <dbReference type="Rhea" id="RHEA:29575"/>
        <dbReference type="ChEBI" id="CHEBI:29101"/>
        <dbReference type="ChEBI" id="CHEBI:33384"/>
    </reaction>
    <physiologicalReaction direction="right-to-left" evidence="1">
        <dbReference type="Rhea" id="RHEA:29577"/>
    </physiologicalReaction>
</comment>
<comment type="catalytic activity">
    <reaction evidence="1">
        <text>L-threonine(in) + Na(+)(in) = L-threonine(out) + Na(+)(out)</text>
        <dbReference type="Rhea" id="RHEA:69999"/>
        <dbReference type="ChEBI" id="CHEBI:29101"/>
        <dbReference type="ChEBI" id="CHEBI:57926"/>
    </reaction>
    <physiologicalReaction direction="right-to-left" evidence="1">
        <dbReference type="Rhea" id="RHEA:70001"/>
    </physiologicalReaction>
</comment>
<comment type="subcellular location">
    <subcellularLocation>
        <location evidence="1">Cell inner membrane</location>
        <topology evidence="1">Multi-pass membrane protein</topology>
    </subcellularLocation>
</comment>
<comment type="similarity">
    <text evidence="1">Belongs to the dicarboxylate/amino acid:cation symporter (DAACS) (TC 2.A.23) family.</text>
</comment>
<accession>B0TNC7</accession>
<proteinExistence type="inferred from homology"/>
<keyword id="KW-0029">Amino-acid transport</keyword>
<keyword id="KW-0997">Cell inner membrane</keyword>
<keyword id="KW-1003">Cell membrane</keyword>
<keyword id="KW-0472">Membrane</keyword>
<keyword id="KW-0769">Symport</keyword>
<keyword id="KW-0812">Transmembrane</keyword>
<keyword id="KW-1133">Transmembrane helix</keyword>
<keyword id="KW-0813">Transport</keyword>
<reference key="1">
    <citation type="submission" date="2008-01" db="EMBL/GenBank/DDBJ databases">
        <title>Complete sequence of Shewanella halifaxensis HAW-EB4.</title>
        <authorList>
            <consortium name="US DOE Joint Genome Institute"/>
            <person name="Copeland A."/>
            <person name="Lucas S."/>
            <person name="Lapidus A."/>
            <person name="Glavina del Rio T."/>
            <person name="Dalin E."/>
            <person name="Tice H."/>
            <person name="Bruce D."/>
            <person name="Goodwin L."/>
            <person name="Pitluck S."/>
            <person name="Sims D."/>
            <person name="Brettin T."/>
            <person name="Detter J.C."/>
            <person name="Han C."/>
            <person name="Kuske C.R."/>
            <person name="Schmutz J."/>
            <person name="Larimer F."/>
            <person name="Land M."/>
            <person name="Hauser L."/>
            <person name="Kyrpides N."/>
            <person name="Kim E."/>
            <person name="Zhao J.-S."/>
            <person name="Richardson P."/>
        </authorList>
    </citation>
    <scope>NUCLEOTIDE SEQUENCE [LARGE SCALE GENOMIC DNA]</scope>
    <source>
        <strain>HAW-EB4</strain>
    </source>
</reference>
<feature type="chain" id="PRO_1000087939" description="Serine/threonine transporter SstT">
    <location>
        <begin position="1"/>
        <end position="407"/>
    </location>
</feature>
<feature type="transmembrane region" description="Helical" evidence="1">
    <location>
        <begin position="14"/>
        <end position="34"/>
    </location>
</feature>
<feature type="transmembrane region" description="Helical" evidence="1">
    <location>
        <begin position="48"/>
        <end position="68"/>
    </location>
</feature>
<feature type="transmembrane region" description="Helical" evidence="1">
    <location>
        <begin position="82"/>
        <end position="102"/>
    </location>
</feature>
<feature type="transmembrane region" description="Helical" evidence="1">
    <location>
        <begin position="141"/>
        <end position="161"/>
    </location>
</feature>
<feature type="transmembrane region" description="Helical" evidence="1">
    <location>
        <begin position="192"/>
        <end position="212"/>
    </location>
</feature>
<feature type="transmembrane region" description="Helical" evidence="1">
    <location>
        <begin position="216"/>
        <end position="236"/>
    </location>
</feature>
<feature type="transmembrane region" description="Helical" evidence="1">
    <location>
        <begin position="290"/>
        <end position="310"/>
    </location>
</feature>
<feature type="transmembrane region" description="Helical" evidence="1">
    <location>
        <begin position="316"/>
        <end position="336"/>
    </location>
</feature>
<feature type="transmembrane region" description="Helical" evidence="1">
    <location>
        <begin position="363"/>
        <end position="383"/>
    </location>
</feature>
<gene>
    <name evidence="1" type="primary">sstT</name>
    <name type="ordered locus">Shal_1547</name>
</gene>
<sequence length="407" mass="42180">MKQKTSLFARLADGSLVLQILVGIVAGVILATVSKSGAESVAFLGELFVGALKAIAPILVFILVAASIANQKKNAKTNMRPIVILYLFGTFSAAVTAVLMSFLFPTTLALSLDAAQASPPEGIGEVIHTLLFQLVDNPVNAVLTGNYIGILAWGVGLGLALHHATDSTKQVFADVSHGVSQMVRFIIRLAPIGIFGLVSATFATTGFTAIAGYMHLLLVLLAAMAIMALIINPAIVYFKIRRNPYPLVFTCLRESGVTAFFTRSSAANIPVNMALCEKLKLHEDTYSVSIPLGATINMGGAAITITILTLAAANTMGIQVDLLTAILLSVVAGVSACGASGVAGGSLLLIPLACSLFGISNDVAMQVVAVGFIIGVIQDSAETGLNSSTDVIFTAAACEAAERKENA</sequence>
<dbReference type="EMBL" id="CP000931">
    <property type="protein sequence ID" value="ABZ76113.1"/>
    <property type="molecule type" value="Genomic_DNA"/>
</dbReference>
<dbReference type="RefSeq" id="WP_012276653.1">
    <property type="nucleotide sequence ID" value="NC_010334.1"/>
</dbReference>
<dbReference type="SMR" id="B0TNC7"/>
<dbReference type="STRING" id="458817.Shal_1547"/>
<dbReference type="KEGG" id="shl:Shal_1547"/>
<dbReference type="eggNOG" id="COG3633">
    <property type="taxonomic scope" value="Bacteria"/>
</dbReference>
<dbReference type="HOGENOM" id="CLU_044581_0_0_6"/>
<dbReference type="OrthoDB" id="9768885at2"/>
<dbReference type="Proteomes" id="UP000001317">
    <property type="component" value="Chromosome"/>
</dbReference>
<dbReference type="GO" id="GO:0005886">
    <property type="term" value="C:plasma membrane"/>
    <property type="evidence" value="ECO:0007669"/>
    <property type="project" value="UniProtKB-SubCell"/>
</dbReference>
<dbReference type="GO" id="GO:0005295">
    <property type="term" value="F:neutral L-amino acid:sodium symporter activity"/>
    <property type="evidence" value="ECO:0007669"/>
    <property type="project" value="TreeGrafter"/>
</dbReference>
<dbReference type="GO" id="GO:0032329">
    <property type="term" value="P:serine transport"/>
    <property type="evidence" value="ECO:0007669"/>
    <property type="project" value="InterPro"/>
</dbReference>
<dbReference type="GO" id="GO:0015826">
    <property type="term" value="P:threonine transport"/>
    <property type="evidence" value="ECO:0007669"/>
    <property type="project" value="InterPro"/>
</dbReference>
<dbReference type="FunFam" id="1.10.3860.10:FF:000003">
    <property type="entry name" value="Serine/threonine transporter sstT"/>
    <property type="match status" value="1"/>
</dbReference>
<dbReference type="Gene3D" id="1.10.3860.10">
    <property type="entry name" value="Sodium:dicarboxylate symporter"/>
    <property type="match status" value="1"/>
</dbReference>
<dbReference type="HAMAP" id="MF_01582">
    <property type="entry name" value="Ser_Thr_transp_SstT"/>
    <property type="match status" value="1"/>
</dbReference>
<dbReference type="InterPro" id="IPR001991">
    <property type="entry name" value="Na-dicarboxylate_symporter"/>
</dbReference>
<dbReference type="InterPro" id="IPR036458">
    <property type="entry name" value="Na:dicarbo_symporter_sf"/>
</dbReference>
<dbReference type="InterPro" id="IPR023025">
    <property type="entry name" value="Ser_Thr_transp_SstT"/>
</dbReference>
<dbReference type="NCBIfam" id="NF010151">
    <property type="entry name" value="PRK13628.1"/>
    <property type="match status" value="1"/>
</dbReference>
<dbReference type="PANTHER" id="PTHR42865">
    <property type="entry name" value="PROTON/GLUTAMATE-ASPARTATE SYMPORTER"/>
    <property type="match status" value="1"/>
</dbReference>
<dbReference type="PANTHER" id="PTHR42865:SF8">
    <property type="entry name" value="SERINE_THREONINE TRANSPORTER SSTT"/>
    <property type="match status" value="1"/>
</dbReference>
<dbReference type="Pfam" id="PF00375">
    <property type="entry name" value="SDF"/>
    <property type="match status" value="1"/>
</dbReference>
<dbReference type="PRINTS" id="PR00173">
    <property type="entry name" value="EDTRNSPORT"/>
</dbReference>
<dbReference type="SUPFAM" id="SSF118215">
    <property type="entry name" value="Proton glutamate symport protein"/>
    <property type="match status" value="1"/>
</dbReference>
<protein>
    <recommendedName>
        <fullName evidence="1">Serine/threonine transporter SstT</fullName>
    </recommendedName>
    <alternativeName>
        <fullName evidence="1">Na(+)/serine-threonine symporter</fullName>
    </alternativeName>
</protein>
<evidence type="ECO:0000255" key="1">
    <source>
        <dbReference type="HAMAP-Rule" id="MF_01582"/>
    </source>
</evidence>
<organism>
    <name type="scientific">Shewanella halifaxensis (strain HAW-EB4)</name>
    <dbReference type="NCBI Taxonomy" id="458817"/>
    <lineage>
        <taxon>Bacteria</taxon>
        <taxon>Pseudomonadati</taxon>
        <taxon>Pseudomonadota</taxon>
        <taxon>Gammaproteobacteria</taxon>
        <taxon>Alteromonadales</taxon>
        <taxon>Shewanellaceae</taxon>
        <taxon>Shewanella</taxon>
    </lineage>
</organism>